<protein>
    <recommendedName>
        <fullName>Thermosome subunit beta</fullName>
    </recommendedName>
    <alternativeName>
        <fullName>Chaperonin subunit beta</fullName>
    </alternativeName>
    <alternativeName>
        <fullName>Thermosome subunit 2</fullName>
    </alternativeName>
</protein>
<accession>O24735</accession>
<accession>F9VMT9</accession>
<reference key="1">
    <citation type="journal article" date="1997" name="Biochem. Biophys. Res. Commun.">
        <title>Purification and molecular cloning of the group II chaperonin from the acidothermophilic archaeon, Sulfolobus sp. strain 7.</title>
        <authorList>
            <person name="Nakamura N."/>
            <person name="Taguchi H."/>
            <person name="Ishii N."/>
            <person name="Yoshida M."/>
            <person name="Suzuki M."/>
            <person name="Endo I."/>
            <person name="Miura K."/>
            <person name="Yohda M."/>
        </authorList>
    </citation>
    <scope>NUCLEOTIDE SEQUENCE [GENOMIC DNA]</scope>
    <scope>PROTEIN SEQUENCE OF 456-471</scope>
    <source>
        <strain>DSM 16993 / JCM 10545 / NBRC 100140 / 7</strain>
    </source>
</reference>
<reference key="2">
    <citation type="journal article" date="2001" name="DNA Res.">
        <title>Complete genome sequence of an aerobic thermoacidophilic Crenarchaeon, Sulfolobus tokodaii strain7.</title>
        <authorList>
            <person name="Kawarabayasi Y."/>
            <person name="Hino Y."/>
            <person name="Horikawa H."/>
            <person name="Jin-no K."/>
            <person name="Takahashi M."/>
            <person name="Sekine M."/>
            <person name="Baba S."/>
            <person name="Ankai A."/>
            <person name="Kosugi H."/>
            <person name="Hosoyama A."/>
            <person name="Fukui S."/>
            <person name="Nagai Y."/>
            <person name="Nishijima K."/>
            <person name="Otsuka R."/>
            <person name="Nakazawa H."/>
            <person name="Takamiya M."/>
            <person name="Kato Y."/>
            <person name="Yoshizawa T."/>
            <person name="Tanaka T."/>
            <person name="Kudoh Y."/>
            <person name="Yamazaki J."/>
            <person name="Kushida N."/>
            <person name="Oguchi A."/>
            <person name="Aoki K."/>
            <person name="Masuda S."/>
            <person name="Yanagii M."/>
            <person name="Nishimura M."/>
            <person name="Yamagishi A."/>
            <person name="Oshima T."/>
            <person name="Kikuchi H."/>
        </authorList>
    </citation>
    <scope>NUCLEOTIDE SEQUENCE [LARGE SCALE GENOMIC DNA]</scope>
    <source>
        <strain>DSM 16993 / JCM 10545 / NBRC 100140 / 7</strain>
    </source>
</reference>
<name>THSB_SULTO</name>
<organism>
    <name type="scientific">Sulfurisphaera tokodaii (strain DSM 16993 / JCM 10545 / NBRC 100140 / 7)</name>
    <name type="common">Sulfolobus tokodaii</name>
    <dbReference type="NCBI Taxonomy" id="273063"/>
    <lineage>
        <taxon>Archaea</taxon>
        <taxon>Thermoproteota</taxon>
        <taxon>Thermoprotei</taxon>
        <taxon>Sulfolobales</taxon>
        <taxon>Sulfolobaceae</taxon>
        <taxon>Sulfurisphaera</taxon>
    </lineage>
</organism>
<evidence type="ECO:0000250" key="1"/>
<evidence type="ECO:0000305" key="2"/>
<gene>
    <name type="primary">thsB</name>
    <name type="ordered locus">STK_03210</name>
</gene>
<comment type="function">
    <text evidence="1">Molecular chaperone; binds unfolded polypeptides in vitro, and has a weak ATPase activity.</text>
</comment>
<comment type="subunit">
    <text evidence="1">Forms a Heterooligomeric complex of two stacked nine-membered rings; one of alpha and the other of beta subunits.</text>
</comment>
<comment type="PTM">
    <text>The N-terminus is blocked.</text>
</comment>
<comment type="similarity">
    <text evidence="2">Belongs to the TCP-1 chaperonin family.</text>
</comment>
<keyword id="KW-0067">ATP-binding</keyword>
<keyword id="KW-0143">Chaperone</keyword>
<keyword id="KW-0903">Direct protein sequencing</keyword>
<keyword id="KW-0547">Nucleotide-binding</keyword>
<keyword id="KW-1185">Reference proteome</keyword>
<dbReference type="EMBL" id="AB001086">
    <property type="protein sequence ID" value="BAA22213.1"/>
    <property type="molecule type" value="Genomic_DNA"/>
</dbReference>
<dbReference type="EMBL" id="BA000023">
    <property type="protein sequence ID" value="BAK54236.1"/>
    <property type="molecule type" value="Genomic_DNA"/>
</dbReference>
<dbReference type="PIR" id="JC5617">
    <property type="entry name" value="JC5617"/>
</dbReference>
<dbReference type="RefSeq" id="WP_052846874.1">
    <property type="nucleotide sequence ID" value="NC_003106.2"/>
</dbReference>
<dbReference type="SMR" id="O24735"/>
<dbReference type="STRING" id="273063.STK_03210"/>
<dbReference type="GeneID" id="95643595"/>
<dbReference type="KEGG" id="sto:STK_03210"/>
<dbReference type="PATRIC" id="fig|273063.9.peg.376"/>
<dbReference type="eggNOG" id="arCOG01257">
    <property type="taxonomic scope" value="Archaea"/>
</dbReference>
<dbReference type="OrthoDB" id="9362at2157"/>
<dbReference type="BRENDA" id="5.6.1.7">
    <property type="organism ID" value="15396"/>
</dbReference>
<dbReference type="Proteomes" id="UP000001015">
    <property type="component" value="Chromosome"/>
</dbReference>
<dbReference type="GO" id="GO:0005524">
    <property type="term" value="F:ATP binding"/>
    <property type="evidence" value="ECO:0007669"/>
    <property type="project" value="UniProtKB-KW"/>
</dbReference>
<dbReference type="GO" id="GO:0016887">
    <property type="term" value="F:ATP hydrolysis activity"/>
    <property type="evidence" value="ECO:0007669"/>
    <property type="project" value="InterPro"/>
</dbReference>
<dbReference type="GO" id="GO:0140662">
    <property type="term" value="F:ATP-dependent protein folding chaperone"/>
    <property type="evidence" value="ECO:0007669"/>
    <property type="project" value="InterPro"/>
</dbReference>
<dbReference type="GO" id="GO:0051082">
    <property type="term" value="F:unfolded protein binding"/>
    <property type="evidence" value="ECO:0007669"/>
    <property type="project" value="InterPro"/>
</dbReference>
<dbReference type="CDD" id="cd03343">
    <property type="entry name" value="cpn60"/>
    <property type="match status" value="1"/>
</dbReference>
<dbReference type="FunFam" id="1.10.560.10:FF:000017">
    <property type="entry name" value="T-complex protein 1 subunit eta"/>
    <property type="match status" value="1"/>
</dbReference>
<dbReference type="FunFam" id="3.50.7.10:FF:000014">
    <property type="entry name" value="Thermosome subunit"/>
    <property type="match status" value="1"/>
</dbReference>
<dbReference type="Gene3D" id="3.50.7.10">
    <property type="entry name" value="GroEL"/>
    <property type="match status" value="1"/>
</dbReference>
<dbReference type="Gene3D" id="1.10.560.10">
    <property type="entry name" value="GroEL-like equatorial domain"/>
    <property type="match status" value="1"/>
</dbReference>
<dbReference type="Gene3D" id="3.30.260.10">
    <property type="entry name" value="TCP-1-like chaperonin intermediate domain"/>
    <property type="match status" value="1"/>
</dbReference>
<dbReference type="InterPro" id="IPR017998">
    <property type="entry name" value="Chaperone_TCP-1"/>
</dbReference>
<dbReference type="InterPro" id="IPR002194">
    <property type="entry name" value="Chaperonin_TCP-1_CS"/>
</dbReference>
<dbReference type="InterPro" id="IPR002423">
    <property type="entry name" value="Cpn60/GroEL/TCP-1"/>
</dbReference>
<dbReference type="InterPro" id="IPR027409">
    <property type="entry name" value="GroEL-like_apical_dom_sf"/>
</dbReference>
<dbReference type="InterPro" id="IPR027413">
    <property type="entry name" value="GROEL-like_equatorial_sf"/>
</dbReference>
<dbReference type="InterPro" id="IPR027410">
    <property type="entry name" value="TCP-1-like_intermed_sf"/>
</dbReference>
<dbReference type="InterPro" id="IPR053374">
    <property type="entry name" value="TCP-1_chaperonin"/>
</dbReference>
<dbReference type="InterPro" id="IPR054827">
    <property type="entry name" value="thermosome_alpha"/>
</dbReference>
<dbReference type="InterPro" id="IPR012714">
    <property type="entry name" value="Thermosome_arc"/>
</dbReference>
<dbReference type="NCBIfam" id="NF041082">
    <property type="entry name" value="thermosome_alpha"/>
    <property type="match status" value="1"/>
</dbReference>
<dbReference type="NCBIfam" id="TIGR02339">
    <property type="entry name" value="thermosome_arch"/>
    <property type="match status" value="1"/>
</dbReference>
<dbReference type="NCBIfam" id="NF041083">
    <property type="entry name" value="thermosome_beta"/>
    <property type="match status" value="1"/>
</dbReference>
<dbReference type="PANTHER" id="PTHR11353">
    <property type="entry name" value="CHAPERONIN"/>
    <property type="match status" value="1"/>
</dbReference>
<dbReference type="Pfam" id="PF00118">
    <property type="entry name" value="Cpn60_TCP1"/>
    <property type="match status" value="1"/>
</dbReference>
<dbReference type="PRINTS" id="PR00304">
    <property type="entry name" value="TCOMPLEXTCP1"/>
</dbReference>
<dbReference type="SUPFAM" id="SSF52029">
    <property type="entry name" value="GroEL apical domain-like"/>
    <property type="match status" value="1"/>
</dbReference>
<dbReference type="SUPFAM" id="SSF48592">
    <property type="entry name" value="GroEL equatorial domain-like"/>
    <property type="match status" value="1"/>
</dbReference>
<dbReference type="SUPFAM" id="SSF54849">
    <property type="entry name" value="GroEL-intermediate domain like"/>
    <property type="match status" value="1"/>
</dbReference>
<dbReference type="PROSITE" id="PS00750">
    <property type="entry name" value="TCP1_1"/>
    <property type="match status" value="1"/>
</dbReference>
<dbReference type="PROSITE" id="PS00751">
    <property type="entry name" value="TCP1_2"/>
    <property type="match status" value="1"/>
</dbReference>
<dbReference type="PROSITE" id="PS00995">
    <property type="entry name" value="TCP1_3"/>
    <property type="match status" value="1"/>
</dbReference>
<sequence>MSTTATVATTPEGIPVIILKEGSSRTYGKEALRINIAAVKAVEEALKSTYGPRGMDKMLVDSLGDITITNDGATILDKMDLQHPAAKLLVQIAKGQDEETADGTKTAVILAGELVKKAEELLYKEIHPTIIVSGFKKAEEQALKTIEEIAQKVSVNDMDILKKVAMTSLNSKAVAGAREYLADIVAKAVTQVAELRGDRWYVDLDNIQIVKKHGGSINDTQIIYGIVVDKEVVHPGMPKRVENAKIALLDASLEVEKPELDAEIRINDPTQMKKFLEEEENLLKEKVDKIAATGANVVICQKGIDEVAQHYLAKKGILAVRRAKKSDLEKLARATGGRVVSNIDELTPQDLGYAALVEERKVGEDKMVFVEGAKNPKAVSILIRGGLERVVDETERALRDALGTVADVIRDGRAVAGGGAVELEIAKRLRKYAPQIGGKEQLAIEAYASALENLVMILIENGGYDPIDLLVKLRSAHENEANKWYGINVFTGQVEDMWKLGVIEPAVVKMNAIKAATEAATLILRIDDLIAAGKKSESKGGESKSEEKKEED</sequence>
<feature type="chain" id="PRO_0000128408" description="Thermosome subunit beta">
    <location>
        <begin position="1"/>
        <end position="552"/>
    </location>
</feature>
<proteinExistence type="evidence at protein level"/>